<keyword id="KW-0012">Acyltransferase</keyword>
<keyword id="KW-0963">Cytoplasm</keyword>
<keyword id="KW-1185">Reference proteome</keyword>
<keyword id="KW-0808">Transferase</keyword>
<sequence>MPVFRLTEELIFPPSYLAERDGLLAVGGDLSAERLLLAYRQGIFPWYTEKTPILWWSPDPRLVLFPAELKISISLRRVLRKNVFSVTFDRAFADVIRRCAEVRRARDDSTWIVPGMVTAYSRLHRLGYAHSVESWHEGELVGGLYGVALGRVFYGESMFTRKTDASKVALVHLVDLLTRGGFQLIDCQVTTAHLQSMGAREISRRRFLTLLAENIPEVVHGESWEGESCCGKRP</sequence>
<comment type="function">
    <text evidence="1">Functions in the N-end rule pathway of protein degradation where it conjugates Leu, Phe and, less efficiently, Met from aminoacyl-tRNAs to the N-termini of proteins containing an N-terminal arginine or lysine.</text>
</comment>
<comment type="catalytic activity">
    <reaction evidence="1">
        <text>N-terminal L-lysyl-[protein] + L-leucyl-tRNA(Leu) = N-terminal L-leucyl-L-lysyl-[protein] + tRNA(Leu) + H(+)</text>
        <dbReference type="Rhea" id="RHEA:12340"/>
        <dbReference type="Rhea" id="RHEA-COMP:9613"/>
        <dbReference type="Rhea" id="RHEA-COMP:9622"/>
        <dbReference type="Rhea" id="RHEA-COMP:12670"/>
        <dbReference type="Rhea" id="RHEA-COMP:12671"/>
        <dbReference type="ChEBI" id="CHEBI:15378"/>
        <dbReference type="ChEBI" id="CHEBI:65249"/>
        <dbReference type="ChEBI" id="CHEBI:78442"/>
        <dbReference type="ChEBI" id="CHEBI:78494"/>
        <dbReference type="ChEBI" id="CHEBI:133043"/>
        <dbReference type="EC" id="2.3.2.6"/>
    </reaction>
</comment>
<comment type="catalytic activity">
    <reaction evidence="1">
        <text>N-terminal L-arginyl-[protein] + L-leucyl-tRNA(Leu) = N-terminal L-leucyl-L-arginyl-[protein] + tRNA(Leu) + H(+)</text>
        <dbReference type="Rhea" id="RHEA:50416"/>
        <dbReference type="Rhea" id="RHEA-COMP:9613"/>
        <dbReference type="Rhea" id="RHEA-COMP:9622"/>
        <dbReference type="Rhea" id="RHEA-COMP:12672"/>
        <dbReference type="Rhea" id="RHEA-COMP:12673"/>
        <dbReference type="ChEBI" id="CHEBI:15378"/>
        <dbReference type="ChEBI" id="CHEBI:64719"/>
        <dbReference type="ChEBI" id="CHEBI:78442"/>
        <dbReference type="ChEBI" id="CHEBI:78494"/>
        <dbReference type="ChEBI" id="CHEBI:133044"/>
        <dbReference type="EC" id="2.3.2.6"/>
    </reaction>
</comment>
<comment type="catalytic activity">
    <reaction evidence="1">
        <text>L-phenylalanyl-tRNA(Phe) + an N-terminal L-alpha-aminoacyl-[protein] = an N-terminal L-phenylalanyl-L-alpha-aminoacyl-[protein] + tRNA(Phe)</text>
        <dbReference type="Rhea" id="RHEA:43632"/>
        <dbReference type="Rhea" id="RHEA-COMP:9668"/>
        <dbReference type="Rhea" id="RHEA-COMP:9699"/>
        <dbReference type="Rhea" id="RHEA-COMP:10636"/>
        <dbReference type="Rhea" id="RHEA-COMP:10637"/>
        <dbReference type="ChEBI" id="CHEBI:78442"/>
        <dbReference type="ChEBI" id="CHEBI:78531"/>
        <dbReference type="ChEBI" id="CHEBI:78597"/>
        <dbReference type="ChEBI" id="CHEBI:83561"/>
        <dbReference type="EC" id="2.3.2.6"/>
    </reaction>
</comment>
<comment type="subcellular location">
    <subcellularLocation>
        <location evidence="1">Cytoplasm</location>
    </subcellularLocation>
</comment>
<comment type="similarity">
    <text evidence="1">Belongs to the L/F-transferase family.</text>
</comment>
<feature type="chain" id="PRO_0000304364" description="Leucyl/phenylalanyl-tRNA--protein transferase">
    <location>
        <begin position="1"/>
        <end position="234"/>
    </location>
</feature>
<protein>
    <recommendedName>
        <fullName evidence="1">Leucyl/phenylalanyl-tRNA--protein transferase</fullName>
        <ecNumber evidence="1">2.3.2.6</ecNumber>
    </recommendedName>
    <alternativeName>
        <fullName evidence="1">L/F-transferase</fullName>
    </alternativeName>
    <alternativeName>
        <fullName evidence="1">Leucyltransferase</fullName>
    </alternativeName>
    <alternativeName>
        <fullName evidence="1">Phenyalanyltransferase</fullName>
    </alternativeName>
</protein>
<proteinExistence type="inferred from homology"/>
<evidence type="ECO:0000255" key="1">
    <source>
        <dbReference type="HAMAP-Rule" id="MF_00688"/>
    </source>
</evidence>
<organism>
    <name type="scientific">Syntrophobacter fumaroxidans (strain DSM 10017 / MPOB)</name>
    <dbReference type="NCBI Taxonomy" id="335543"/>
    <lineage>
        <taxon>Bacteria</taxon>
        <taxon>Pseudomonadati</taxon>
        <taxon>Thermodesulfobacteriota</taxon>
        <taxon>Syntrophobacteria</taxon>
        <taxon>Syntrophobacterales</taxon>
        <taxon>Syntrophobacteraceae</taxon>
        <taxon>Syntrophobacter</taxon>
    </lineage>
</organism>
<accession>A0LE95</accession>
<gene>
    <name evidence="1" type="primary">aat</name>
    <name type="ordered locus">Sfum_0044</name>
</gene>
<name>LFTR_SYNFM</name>
<dbReference type="EC" id="2.3.2.6" evidence="1"/>
<dbReference type="EMBL" id="CP000478">
    <property type="protein sequence ID" value="ABK15747.1"/>
    <property type="molecule type" value="Genomic_DNA"/>
</dbReference>
<dbReference type="RefSeq" id="WP_011696920.1">
    <property type="nucleotide sequence ID" value="NC_008554.1"/>
</dbReference>
<dbReference type="SMR" id="A0LE95"/>
<dbReference type="FunCoup" id="A0LE95">
    <property type="interactions" value="256"/>
</dbReference>
<dbReference type="STRING" id="335543.Sfum_0044"/>
<dbReference type="KEGG" id="sfu:Sfum_0044"/>
<dbReference type="eggNOG" id="COG2360">
    <property type="taxonomic scope" value="Bacteria"/>
</dbReference>
<dbReference type="HOGENOM" id="CLU_075045_0_0_7"/>
<dbReference type="InParanoid" id="A0LE95"/>
<dbReference type="OrthoDB" id="9790282at2"/>
<dbReference type="Proteomes" id="UP000001784">
    <property type="component" value="Chromosome"/>
</dbReference>
<dbReference type="GO" id="GO:0005737">
    <property type="term" value="C:cytoplasm"/>
    <property type="evidence" value="ECO:0007669"/>
    <property type="project" value="UniProtKB-SubCell"/>
</dbReference>
<dbReference type="GO" id="GO:0008914">
    <property type="term" value="F:leucyl-tRNA--protein transferase activity"/>
    <property type="evidence" value="ECO:0007669"/>
    <property type="project" value="UniProtKB-UniRule"/>
</dbReference>
<dbReference type="GO" id="GO:0030163">
    <property type="term" value="P:protein catabolic process"/>
    <property type="evidence" value="ECO:0007669"/>
    <property type="project" value="UniProtKB-UniRule"/>
</dbReference>
<dbReference type="FunFam" id="3.30.70.3550:FF:000001">
    <property type="entry name" value="Leucyl/phenylalanyl-tRNA--protein transferase"/>
    <property type="match status" value="1"/>
</dbReference>
<dbReference type="FunFam" id="3.40.630.70:FF:000001">
    <property type="entry name" value="Leucyl/phenylalanyl-tRNA--protein transferase"/>
    <property type="match status" value="1"/>
</dbReference>
<dbReference type="Gene3D" id="3.40.630.70">
    <property type="entry name" value="Leucyl/phenylalanyl-tRNA-protein transferase, C-terminal domain"/>
    <property type="match status" value="1"/>
</dbReference>
<dbReference type="Gene3D" id="3.30.70.3550">
    <property type="entry name" value="Leucyl/phenylalanyl-tRNA-protein transferase, N-terminal domain"/>
    <property type="match status" value="1"/>
</dbReference>
<dbReference type="HAMAP" id="MF_00688">
    <property type="entry name" value="Leu_Phe_trans"/>
    <property type="match status" value="1"/>
</dbReference>
<dbReference type="InterPro" id="IPR016181">
    <property type="entry name" value="Acyl_CoA_acyltransferase"/>
</dbReference>
<dbReference type="InterPro" id="IPR004616">
    <property type="entry name" value="Leu/Phe-tRNA_Trfase"/>
</dbReference>
<dbReference type="InterPro" id="IPR042203">
    <property type="entry name" value="Leu/Phe-tRNA_Trfase_C"/>
</dbReference>
<dbReference type="InterPro" id="IPR042221">
    <property type="entry name" value="Leu/Phe-tRNA_Trfase_N"/>
</dbReference>
<dbReference type="NCBIfam" id="TIGR00667">
    <property type="entry name" value="aat"/>
    <property type="match status" value="1"/>
</dbReference>
<dbReference type="PANTHER" id="PTHR30098">
    <property type="entry name" value="LEUCYL/PHENYLALANYL-TRNA--PROTEIN TRANSFERASE"/>
    <property type="match status" value="1"/>
</dbReference>
<dbReference type="PANTHER" id="PTHR30098:SF2">
    <property type="entry name" value="LEUCYL_PHENYLALANYL-TRNA--PROTEIN TRANSFERASE"/>
    <property type="match status" value="1"/>
</dbReference>
<dbReference type="Pfam" id="PF03588">
    <property type="entry name" value="Leu_Phe_trans"/>
    <property type="match status" value="1"/>
</dbReference>
<dbReference type="SUPFAM" id="SSF55729">
    <property type="entry name" value="Acyl-CoA N-acyltransferases (Nat)"/>
    <property type="match status" value="1"/>
</dbReference>
<reference key="1">
    <citation type="submission" date="2006-10" db="EMBL/GenBank/DDBJ databases">
        <title>Complete sequence of Syntrophobacter fumaroxidans MPOB.</title>
        <authorList>
            <consortium name="US DOE Joint Genome Institute"/>
            <person name="Copeland A."/>
            <person name="Lucas S."/>
            <person name="Lapidus A."/>
            <person name="Barry K."/>
            <person name="Detter J.C."/>
            <person name="Glavina del Rio T."/>
            <person name="Hammon N."/>
            <person name="Israni S."/>
            <person name="Pitluck S."/>
            <person name="Goltsman E.G."/>
            <person name="Martinez M."/>
            <person name="Schmutz J."/>
            <person name="Larimer F."/>
            <person name="Land M."/>
            <person name="Hauser L."/>
            <person name="Kyrpides N."/>
            <person name="Kim E."/>
            <person name="Boone D.R."/>
            <person name="Brockman F."/>
            <person name="Culley D."/>
            <person name="Ferry J."/>
            <person name="Gunsalus R."/>
            <person name="McInerney M.J."/>
            <person name="Morrison M."/>
            <person name="Plugge C."/>
            <person name="Rohlin L."/>
            <person name="Scholten J."/>
            <person name="Sieber J."/>
            <person name="Stams A.J.M."/>
            <person name="Worm P."/>
            <person name="Henstra A.M."/>
            <person name="Richardson P."/>
        </authorList>
    </citation>
    <scope>NUCLEOTIDE SEQUENCE [LARGE SCALE GENOMIC DNA]</scope>
    <source>
        <strain>DSM 10017 / MPOB</strain>
    </source>
</reference>